<dbReference type="EC" id="1.1.1.86" evidence="1"/>
<dbReference type="EMBL" id="CP001298">
    <property type="protein sequence ID" value="ACK81266.1"/>
    <property type="molecule type" value="Genomic_DNA"/>
</dbReference>
<dbReference type="RefSeq" id="WP_003597269.1">
    <property type="nucleotide sequence ID" value="NC_011757.1"/>
</dbReference>
<dbReference type="SMR" id="B7KYZ3"/>
<dbReference type="KEGG" id="mch:Mchl_0329"/>
<dbReference type="HOGENOM" id="CLU_033821_0_1_5"/>
<dbReference type="UniPathway" id="UPA00047">
    <property type="reaction ID" value="UER00056"/>
</dbReference>
<dbReference type="UniPathway" id="UPA00049">
    <property type="reaction ID" value="UER00060"/>
</dbReference>
<dbReference type="Proteomes" id="UP000002385">
    <property type="component" value="Chromosome"/>
</dbReference>
<dbReference type="GO" id="GO:0005829">
    <property type="term" value="C:cytosol"/>
    <property type="evidence" value="ECO:0007669"/>
    <property type="project" value="TreeGrafter"/>
</dbReference>
<dbReference type="GO" id="GO:0004455">
    <property type="term" value="F:ketol-acid reductoisomerase activity"/>
    <property type="evidence" value="ECO:0007669"/>
    <property type="project" value="UniProtKB-UniRule"/>
</dbReference>
<dbReference type="GO" id="GO:0000287">
    <property type="term" value="F:magnesium ion binding"/>
    <property type="evidence" value="ECO:0007669"/>
    <property type="project" value="UniProtKB-UniRule"/>
</dbReference>
<dbReference type="GO" id="GO:0050661">
    <property type="term" value="F:NADP binding"/>
    <property type="evidence" value="ECO:0007669"/>
    <property type="project" value="InterPro"/>
</dbReference>
<dbReference type="GO" id="GO:0009097">
    <property type="term" value="P:isoleucine biosynthetic process"/>
    <property type="evidence" value="ECO:0007669"/>
    <property type="project" value="UniProtKB-UniRule"/>
</dbReference>
<dbReference type="GO" id="GO:0009099">
    <property type="term" value="P:L-valine biosynthetic process"/>
    <property type="evidence" value="ECO:0007669"/>
    <property type="project" value="UniProtKB-UniRule"/>
</dbReference>
<dbReference type="FunFam" id="3.40.50.720:FF:000023">
    <property type="entry name" value="Ketol-acid reductoisomerase (NADP(+))"/>
    <property type="match status" value="1"/>
</dbReference>
<dbReference type="Gene3D" id="6.10.240.10">
    <property type="match status" value="1"/>
</dbReference>
<dbReference type="Gene3D" id="3.40.50.720">
    <property type="entry name" value="NAD(P)-binding Rossmann-like Domain"/>
    <property type="match status" value="1"/>
</dbReference>
<dbReference type="HAMAP" id="MF_00435">
    <property type="entry name" value="IlvC"/>
    <property type="match status" value="1"/>
</dbReference>
<dbReference type="InterPro" id="IPR008927">
    <property type="entry name" value="6-PGluconate_DH-like_C_sf"/>
</dbReference>
<dbReference type="InterPro" id="IPR013023">
    <property type="entry name" value="KARI"/>
</dbReference>
<dbReference type="InterPro" id="IPR000506">
    <property type="entry name" value="KARI_C"/>
</dbReference>
<dbReference type="InterPro" id="IPR013116">
    <property type="entry name" value="KARI_N"/>
</dbReference>
<dbReference type="InterPro" id="IPR014359">
    <property type="entry name" value="KARI_prok"/>
</dbReference>
<dbReference type="InterPro" id="IPR036291">
    <property type="entry name" value="NAD(P)-bd_dom_sf"/>
</dbReference>
<dbReference type="NCBIfam" id="TIGR00465">
    <property type="entry name" value="ilvC"/>
    <property type="match status" value="1"/>
</dbReference>
<dbReference type="NCBIfam" id="NF004017">
    <property type="entry name" value="PRK05479.1"/>
    <property type="match status" value="1"/>
</dbReference>
<dbReference type="NCBIfam" id="NF009940">
    <property type="entry name" value="PRK13403.1"/>
    <property type="match status" value="1"/>
</dbReference>
<dbReference type="PANTHER" id="PTHR21371">
    <property type="entry name" value="KETOL-ACID REDUCTOISOMERASE, MITOCHONDRIAL"/>
    <property type="match status" value="1"/>
</dbReference>
<dbReference type="PANTHER" id="PTHR21371:SF1">
    <property type="entry name" value="KETOL-ACID REDUCTOISOMERASE, MITOCHONDRIAL"/>
    <property type="match status" value="1"/>
</dbReference>
<dbReference type="Pfam" id="PF01450">
    <property type="entry name" value="KARI_C"/>
    <property type="match status" value="1"/>
</dbReference>
<dbReference type="Pfam" id="PF07991">
    <property type="entry name" value="KARI_N"/>
    <property type="match status" value="1"/>
</dbReference>
<dbReference type="PIRSF" id="PIRSF000116">
    <property type="entry name" value="IlvC_gammaproteo"/>
    <property type="match status" value="1"/>
</dbReference>
<dbReference type="SUPFAM" id="SSF48179">
    <property type="entry name" value="6-phosphogluconate dehydrogenase C-terminal domain-like"/>
    <property type="match status" value="1"/>
</dbReference>
<dbReference type="SUPFAM" id="SSF51735">
    <property type="entry name" value="NAD(P)-binding Rossmann-fold domains"/>
    <property type="match status" value="1"/>
</dbReference>
<dbReference type="PROSITE" id="PS51851">
    <property type="entry name" value="KARI_C"/>
    <property type="match status" value="1"/>
</dbReference>
<dbReference type="PROSITE" id="PS51850">
    <property type="entry name" value="KARI_N"/>
    <property type="match status" value="1"/>
</dbReference>
<feature type="chain" id="PRO_1000190976" description="Ketol-acid reductoisomerase (NADP(+))">
    <location>
        <begin position="1"/>
        <end position="339"/>
    </location>
</feature>
<feature type="domain" description="KARI N-terminal Rossmann" evidence="2">
    <location>
        <begin position="1"/>
        <end position="182"/>
    </location>
</feature>
<feature type="domain" description="KARI C-terminal knotted" evidence="3">
    <location>
        <begin position="183"/>
        <end position="328"/>
    </location>
</feature>
<feature type="active site" evidence="1">
    <location>
        <position position="108"/>
    </location>
</feature>
<feature type="binding site" evidence="1">
    <location>
        <begin position="24"/>
        <end position="27"/>
    </location>
    <ligand>
        <name>NADP(+)</name>
        <dbReference type="ChEBI" id="CHEBI:58349"/>
    </ligand>
</feature>
<feature type="binding site" evidence="1">
    <location>
        <position position="48"/>
    </location>
    <ligand>
        <name>NADP(+)</name>
        <dbReference type="ChEBI" id="CHEBI:58349"/>
    </ligand>
</feature>
<feature type="binding site" evidence="1">
    <location>
        <position position="51"/>
    </location>
    <ligand>
        <name>NADP(+)</name>
        <dbReference type="ChEBI" id="CHEBI:58349"/>
    </ligand>
</feature>
<feature type="binding site" evidence="1">
    <location>
        <position position="53"/>
    </location>
    <ligand>
        <name>NADP(+)</name>
        <dbReference type="ChEBI" id="CHEBI:58349"/>
    </ligand>
</feature>
<feature type="binding site" evidence="1">
    <location>
        <begin position="83"/>
        <end position="86"/>
    </location>
    <ligand>
        <name>NADP(+)</name>
        <dbReference type="ChEBI" id="CHEBI:58349"/>
    </ligand>
</feature>
<feature type="binding site" evidence="1">
    <location>
        <position position="134"/>
    </location>
    <ligand>
        <name>NADP(+)</name>
        <dbReference type="ChEBI" id="CHEBI:58349"/>
    </ligand>
</feature>
<feature type="binding site" evidence="1">
    <location>
        <position position="191"/>
    </location>
    <ligand>
        <name>Mg(2+)</name>
        <dbReference type="ChEBI" id="CHEBI:18420"/>
        <label>1</label>
    </ligand>
</feature>
<feature type="binding site" evidence="1">
    <location>
        <position position="191"/>
    </location>
    <ligand>
        <name>Mg(2+)</name>
        <dbReference type="ChEBI" id="CHEBI:18420"/>
        <label>2</label>
    </ligand>
</feature>
<feature type="binding site" evidence="1">
    <location>
        <position position="195"/>
    </location>
    <ligand>
        <name>Mg(2+)</name>
        <dbReference type="ChEBI" id="CHEBI:18420"/>
        <label>1</label>
    </ligand>
</feature>
<feature type="binding site" evidence="1">
    <location>
        <position position="227"/>
    </location>
    <ligand>
        <name>Mg(2+)</name>
        <dbReference type="ChEBI" id="CHEBI:18420"/>
        <label>2</label>
    </ligand>
</feature>
<feature type="binding site" evidence="1">
    <location>
        <position position="231"/>
    </location>
    <ligand>
        <name>Mg(2+)</name>
        <dbReference type="ChEBI" id="CHEBI:18420"/>
        <label>2</label>
    </ligand>
</feature>
<feature type="binding site" evidence="1">
    <location>
        <position position="252"/>
    </location>
    <ligand>
        <name>substrate</name>
    </ligand>
</feature>
<name>ILVC_METC4</name>
<organism>
    <name type="scientific">Methylorubrum extorquens (strain CM4 / NCIMB 13688)</name>
    <name type="common">Methylobacterium extorquens</name>
    <dbReference type="NCBI Taxonomy" id="440085"/>
    <lineage>
        <taxon>Bacteria</taxon>
        <taxon>Pseudomonadati</taxon>
        <taxon>Pseudomonadota</taxon>
        <taxon>Alphaproteobacteria</taxon>
        <taxon>Hyphomicrobiales</taxon>
        <taxon>Methylobacteriaceae</taxon>
        <taxon>Methylorubrum</taxon>
    </lineage>
</organism>
<proteinExistence type="inferred from homology"/>
<sequence>MRVYYDRDADLNLIKGKNVVIVGYGSQGHAHALNLRDSGVKDIVIALREGSATAKKAEHEGFKVMNVADAAKWGDVVMMLTPDELQGDIYKESLEPNMKQGAALLFAHGLNVHFNLIEPRKDLDVLMVAPKGPGHTVRGEYLKGGGVPTLIAIAQDASGNAHDLGLSYASANGGGRAGIIETTFKEECETDLFGEQAVLCGGLVELIKAGFETLVEAGYAPEMAYFECLHEVKLIVDLIYEGGIANMNYSISNTAEYGEYVTGPRIVTPETKAEMKRVLNDIQSGIFTRNWMLENKVGQTSFKATRAKLAAHPIEEVGAKLRGMMPWISEKALVDKTKN</sequence>
<gene>
    <name evidence="1" type="primary">ilvC</name>
    <name type="ordered locus">Mchl_0329</name>
</gene>
<reference key="1">
    <citation type="submission" date="2008-12" db="EMBL/GenBank/DDBJ databases">
        <title>Complete sequence of chromosome of Methylobacterium chloromethanicum CM4.</title>
        <authorList>
            <consortium name="US DOE Joint Genome Institute"/>
            <person name="Lucas S."/>
            <person name="Copeland A."/>
            <person name="Lapidus A."/>
            <person name="Glavina del Rio T."/>
            <person name="Dalin E."/>
            <person name="Tice H."/>
            <person name="Bruce D."/>
            <person name="Goodwin L."/>
            <person name="Pitluck S."/>
            <person name="Chertkov O."/>
            <person name="Brettin T."/>
            <person name="Detter J.C."/>
            <person name="Han C."/>
            <person name="Larimer F."/>
            <person name="Land M."/>
            <person name="Hauser L."/>
            <person name="Kyrpides N."/>
            <person name="Mikhailova N."/>
            <person name="Marx C."/>
            <person name="Richardson P."/>
        </authorList>
    </citation>
    <scope>NUCLEOTIDE SEQUENCE [LARGE SCALE GENOMIC DNA]</scope>
    <source>
        <strain>CM4 / NCIMB 13688</strain>
    </source>
</reference>
<protein>
    <recommendedName>
        <fullName evidence="1">Ketol-acid reductoisomerase (NADP(+))</fullName>
        <shortName evidence="1">KARI</shortName>
        <ecNumber evidence="1">1.1.1.86</ecNumber>
    </recommendedName>
    <alternativeName>
        <fullName evidence="1">Acetohydroxy-acid isomeroreductase</fullName>
        <shortName evidence="1">AHIR</shortName>
    </alternativeName>
    <alternativeName>
        <fullName evidence="1">Alpha-keto-beta-hydroxylacyl reductoisomerase</fullName>
    </alternativeName>
    <alternativeName>
        <fullName evidence="1">Ketol-acid reductoisomerase type 1</fullName>
    </alternativeName>
    <alternativeName>
        <fullName evidence="1">Ketol-acid reductoisomerase type I</fullName>
    </alternativeName>
</protein>
<accession>B7KYZ3</accession>
<keyword id="KW-0028">Amino-acid biosynthesis</keyword>
<keyword id="KW-0100">Branched-chain amino acid biosynthesis</keyword>
<keyword id="KW-0460">Magnesium</keyword>
<keyword id="KW-0479">Metal-binding</keyword>
<keyword id="KW-0521">NADP</keyword>
<keyword id="KW-0560">Oxidoreductase</keyword>
<comment type="function">
    <text evidence="1">Involved in the biosynthesis of branched-chain amino acids (BCAA). Catalyzes an alkyl-migration followed by a ketol-acid reduction of (S)-2-acetolactate (S2AL) to yield (R)-2,3-dihydroxy-isovalerate. In the isomerase reaction, S2AL is rearranged via a Mg-dependent methyl migration to produce 3-hydroxy-3-methyl-2-ketobutyrate (HMKB). In the reductase reaction, this 2-ketoacid undergoes a metal-dependent reduction by NADPH to yield (R)-2,3-dihydroxy-isovalerate.</text>
</comment>
<comment type="catalytic activity">
    <reaction evidence="1">
        <text>(2R)-2,3-dihydroxy-3-methylbutanoate + NADP(+) = (2S)-2-acetolactate + NADPH + H(+)</text>
        <dbReference type="Rhea" id="RHEA:22068"/>
        <dbReference type="ChEBI" id="CHEBI:15378"/>
        <dbReference type="ChEBI" id="CHEBI:49072"/>
        <dbReference type="ChEBI" id="CHEBI:57783"/>
        <dbReference type="ChEBI" id="CHEBI:58349"/>
        <dbReference type="ChEBI" id="CHEBI:58476"/>
        <dbReference type="EC" id="1.1.1.86"/>
    </reaction>
</comment>
<comment type="catalytic activity">
    <reaction evidence="1">
        <text>(2R,3R)-2,3-dihydroxy-3-methylpentanoate + NADP(+) = (S)-2-ethyl-2-hydroxy-3-oxobutanoate + NADPH + H(+)</text>
        <dbReference type="Rhea" id="RHEA:13493"/>
        <dbReference type="ChEBI" id="CHEBI:15378"/>
        <dbReference type="ChEBI" id="CHEBI:49256"/>
        <dbReference type="ChEBI" id="CHEBI:49258"/>
        <dbReference type="ChEBI" id="CHEBI:57783"/>
        <dbReference type="ChEBI" id="CHEBI:58349"/>
        <dbReference type="EC" id="1.1.1.86"/>
    </reaction>
</comment>
<comment type="cofactor">
    <cofactor evidence="1">
        <name>Mg(2+)</name>
        <dbReference type="ChEBI" id="CHEBI:18420"/>
    </cofactor>
    <text evidence="1">Binds 2 magnesium ions per subunit.</text>
</comment>
<comment type="pathway">
    <text evidence="1">Amino-acid biosynthesis; L-isoleucine biosynthesis; L-isoleucine from 2-oxobutanoate: step 2/4.</text>
</comment>
<comment type="pathway">
    <text evidence="1">Amino-acid biosynthesis; L-valine biosynthesis; L-valine from pyruvate: step 2/4.</text>
</comment>
<comment type="similarity">
    <text evidence="1">Belongs to the ketol-acid reductoisomerase family.</text>
</comment>
<evidence type="ECO:0000255" key="1">
    <source>
        <dbReference type="HAMAP-Rule" id="MF_00435"/>
    </source>
</evidence>
<evidence type="ECO:0000255" key="2">
    <source>
        <dbReference type="PROSITE-ProRule" id="PRU01197"/>
    </source>
</evidence>
<evidence type="ECO:0000255" key="3">
    <source>
        <dbReference type="PROSITE-ProRule" id="PRU01198"/>
    </source>
</evidence>